<proteinExistence type="inferred from homology"/>
<comment type="function">
    <text evidence="1">Cooperates with the reticulon proteins and tubule-shaping DP1 family proteins to generate and maintain the structure of the tubular endoplasmic reticulum network. Has GTPase activity, which is required for its function in ER organization.</text>
</comment>
<comment type="subcellular location">
    <subcellularLocation>
        <location evidence="1">Endoplasmic reticulum membrane</location>
        <topology evidence="1">Multi-pass membrane protein</topology>
    </subcellularLocation>
    <text evidence="1">Enriched in the cortical ER. Concentrated in punctae along the ER tubules.</text>
</comment>
<comment type="similarity">
    <text evidence="2">Belongs to the TRAFAC class dynamin-like GTPase superfamily. GB1/RHD3 GTPase family. RHD3 subfamily.</text>
</comment>
<reference key="1">
    <citation type="journal article" date="2015" name="PLoS Genet.">
        <title>The dynamic genome and transcriptome of the human fungal pathogen Blastomyces and close relative Emmonsia.</title>
        <authorList>
            <person name="Munoz J.F."/>
            <person name="Gauthier G.M."/>
            <person name="Desjardins C.A."/>
            <person name="Gallo J.E."/>
            <person name="Holder J."/>
            <person name="Sullivan T.D."/>
            <person name="Marty A.J."/>
            <person name="Carmen J.C."/>
            <person name="Chen Z."/>
            <person name="Ding L."/>
            <person name="Gujja S."/>
            <person name="Magrini V."/>
            <person name="Misas E."/>
            <person name="Mitreva M."/>
            <person name="Priest M."/>
            <person name="Saif S."/>
            <person name="Whiston E.A."/>
            <person name="Young S."/>
            <person name="Zeng Q."/>
            <person name="Goldman W.E."/>
            <person name="Mardis E.R."/>
            <person name="Taylor J.W."/>
            <person name="McEwen J.G."/>
            <person name="Clay O.K."/>
            <person name="Klein B.S."/>
            <person name="Cuomo C.A."/>
        </authorList>
    </citation>
    <scope>NUCLEOTIDE SEQUENCE [LARGE SCALE GENOMIC DNA]</scope>
    <source>
        <strain>ER-3 / ATCC MYA-2586</strain>
    </source>
</reference>
<gene>
    <name evidence="1" type="primary">SEY1</name>
    <name type="ORF">BDCG_05428</name>
</gene>
<protein>
    <recommendedName>
        <fullName evidence="1">Protein SEY1</fullName>
        <ecNumber evidence="1">3.6.5.-</ecNumber>
    </recommendedName>
</protein>
<name>SEY1_AJEDR</name>
<dbReference type="EC" id="3.6.5.-" evidence="1"/>
<dbReference type="EMBL" id="EQ999977">
    <property type="protein sequence ID" value="EEQ90308.1"/>
    <property type="molecule type" value="Genomic_DNA"/>
</dbReference>
<dbReference type="SMR" id="C5GMK3"/>
<dbReference type="STRING" id="559297.C5GMK3"/>
<dbReference type="VEuPathDB" id="FungiDB:BDCG_05428"/>
<dbReference type="eggNOG" id="KOG2203">
    <property type="taxonomic scope" value="Eukaryota"/>
</dbReference>
<dbReference type="HOGENOM" id="CLU_011270_0_0_1"/>
<dbReference type="OMA" id="PIIKMTE"/>
<dbReference type="GO" id="GO:0005789">
    <property type="term" value="C:endoplasmic reticulum membrane"/>
    <property type="evidence" value="ECO:0007669"/>
    <property type="project" value="UniProtKB-SubCell"/>
</dbReference>
<dbReference type="GO" id="GO:0005525">
    <property type="term" value="F:GTP binding"/>
    <property type="evidence" value="ECO:0007669"/>
    <property type="project" value="UniProtKB-UniRule"/>
</dbReference>
<dbReference type="GO" id="GO:0003924">
    <property type="term" value="F:GTPase activity"/>
    <property type="evidence" value="ECO:0007669"/>
    <property type="project" value="UniProtKB-UniRule"/>
</dbReference>
<dbReference type="GO" id="GO:0016320">
    <property type="term" value="P:endoplasmic reticulum membrane fusion"/>
    <property type="evidence" value="ECO:0007669"/>
    <property type="project" value="TreeGrafter"/>
</dbReference>
<dbReference type="CDD" id="cd01851">
    <property type="entry name" value="GBP"/>
    <property type="match status" value="1"/>
</dbReference>
<dbReference type="FunFam" id="3.40.50.300:FF:000727">
    <property type="entry name" value="Protein SEY1 homolog"/>
    <property type="match status" value="1"/>
</dbReference>
<dbReference type="Gene3D" id="3.40.50.300">
    <property type="entry name" value="P-loop containing nucleotide triphosphate hydrolases"/>
    <property type="match status" value="1"/>
</dbReference>
<dbReference type="HAMAP" id="MF_03109">
    <property type="entry name" value="Sey1"/>
    <property type="match status" value="1"/>
</dbReference>
<dbReference type="InterPro" id="IPR030386">
    <property type="entry name" value="G_GB1_RHD3_dom"/>
</dbReference>
<dbReference type="InterPro" id="IPR027417">
    <property type="entry name" value="P-loop_NTPase"/>
</dbReference>
<dbReference type="InterPro" id="IPR008803">
    <property type="entry name" value="RHD3/Sey1"/>
</dbReference>
<dbReference type="InterPro" id="IPR046758">
    <property type="entry name" value="Sey1/RHD3-like_3HB"/>
</dbReference>
<dbReference type="PANTHER" id="PTHR45923">
    <property type="entry name" value="PROTEIN SEY1"/>
    <property type="match status" value="1"/>
</dbReference>
<dbReference type="PANTHER" id="PTHR45923:SF2">
    <property type="entry name" value="PROTEIN SEY1"/>
    <property type="match status" value="1"/>
</dbReference>
<dbReference type="Pfam" id="PF05879">
    <property type="entry name" value="RHD3_GTPase"/>
    <property type="match status" value="1"/>
</dbReference>
<dbReference type="Pfam" id="PF20428">
    <property type="entry name" value="Sey1_3HB"/>
    <property type="match status" value="1"/>
</dbReference>
<dbReference type="SUPFAM" id="SSF52540">
    <property type="entry name" value="P-loop containing nucleoside triphosphate hydrolases"/>
    <property type="match status" value="1"/>
</dbReference>
<dbReference type="PROSITE" id="PS51715">
    <property type="entry name" value="G_GB1_RHD3"/>
    <property type="match status" value="1"/>
</dbReference>
<keyword id="KW-0175">Coiled coil</keyword>
<keyword id="KW-0256">Endoplasmic reticulum</keyword>
<keyword id="KW-0342">GTP-binding</keyword>
<keyword id="KW-0378">Hydrolase</keyword>
<keyword id="KW-0472">Membrane</keyword>
<keyword id="KW-0547">Nucleotide-binding</keyword>
<keyword id="KW-0812">Transmembrane</keyword>
<keyword id="KW-1133">Transmembrane helix</keyword>
<feature type="chain" id="PRO_0000384967" description="Protein SEY1">
    <location>
        <begin position="1"/>
        <end position="875"/>
    </location>
</feature>
<feature type="topological domain" description="Cytoplasmic" evidence="1">
    <location>
        <begin position="1"/>
        <end position="749"/>
    </location>
</feature>
<feature type="transmembrane region" description="Helical" evidence="1">
    <location>
        <begin position="750"/>
        <end position="770"/>
    </location>
</feature>
<feature type="topological domain" description="Lumenal" evidence="1">
    <location>
        <begin position="771"/>
        <end position="773"/>
    </location>
</feature>
<feature type="transmembrane region" description="Helical" evidence="1">
    <location>
        <begin position="774"/>
        <end position="794"/>
    </location>
</feature>
<feature type="topological domain" description="Cytoplasmic" evidence="1">
    <location>
        <begin position="795"/>
        <end position="875"/>
    </location>
</feature>
<feature type="domain" description="GB1/RHD3-type G" evidence="2">
    <location>
        <begin position="49"/>
        <end position="307"/>
    </location>
</feature>
<feature type="region of interest" description="Disordered" evidence="3">
    <location>
        <begin position="676"/>
        <end position="704"/>
    </location>
</feature>
<feature type="region of interest" description="Disordered" evidence="3">
    <location>
        <begin position="831"/>
        <end position="875"/>
    </location>
</feature>
<feature type="coiled-coil region" evidence="1">
    <location>
        <begin position="482"/>
        <end position="506"/>
    </location>
</feature>
<feature type="compositionally biased region" description="Acidic residues" evidence="3">
    <location>
        <begin position="690"/>
        <end position="704"/>
    </location>
</feature>
<feature type="compositionally biased region" description="Basic and acidic residues" evidence="3">
    <location>
        <begin position="839"/>
        <end position="864"/>
    </location>
</feature>
<feature type="compositionally biased region" description="Acidic residues" evidence="3">
    <location>
        <begin position="865"/>
        <end position="875"/>
    </location>
</feature>
<feature type="binding site" evidence="1">
    <location>
        <begin position="59"/>
        <end position="66"/>
    </location>
    <ligand>
        <name>GTP</name>
        <dbReference type="ChEBI" id="CHEBI:37565"/>
    </ligand>
</feature>
<sequence length="875" mass="98869">MVANGHFASNGEGQDSGSYEHGVQVIDEDKEFNPNVSRYLTYENVTPAGFNYHLISVFGSQSTGKSTLLNHLFGTHFSVMSETERRQTTKGIWLSKNKRVESSKDRDPQMKMADNILVMDVEGTDGRERGEDQDFERKSALFALATSEVLIVNIWEHQVGLYQGANMGLLKTVFEVNLELFLKDNKSTPRSLLFFVIRDFVGTTPLQNLQNTLLQDLNRIWSSLSKPAGLENSTINDYFDFAFAGLPHKNFQPEKFVDEVQKLSTRFRNAHRDPNNVDSRGTGSIEGGIFLPEYHRRIPADGFAVYAEGVWDQIVNNKDLDLPTQQELLAQFRCDEISREALVAFDEAISPFESKQAEAVQAGSPQVLGGLGPVMRNARMNAVKNFDAEASRYHKRVYQMKKSELEEKIDTRLKALFLGQLNAAHRSGVQDFSESVSAAVKAGQKRGASYDFAEIVSRERQLAIEKFEKEARSTLVEDAPWSNYQQELSLYQKDLERISGQLRRDEMRRLATRVERWVRSRLGESVDLEFNALGSGRGGSGAPEFGDKPSENTIWDRVWTIFVDTVLDAERRFTERASSFDASLDEVDVGLWRLRRKSWGVLRAKIEEEVMEGNLLLKLRENFEDKFRYDDAGVPRIWRPTDDIESVYTQARESTLTLIPLLARFRLAETNAPPPLDKWIGHTPSSATPADEEDLTPIGGVDEDEGKSLEEEMTMIGEAKKQDLIVRFKKTADGVYVEAKRSAIGGITQVPLYFYGLLLALGWNEIMAVLRNPAYFFLLFVCAIGAYVTYQLNLWGPIIKMTEAASHQALEEGKRRLRDFLEASDTGRQAMAMSGARNATEEHEMSNLNRKSGERGGQKYRGEDVADDDDVDDDF</sequence>
<evidence type="ECO:0000255" key="1">
    <source>
        <dbReference type="HAMAP-Rule" id="MF_03109"/>
    </source>
</evidence>
<evidence type="ECO:0000255" key="2">
    <source>
        <dbReference type="PROSITE-ProRule" id="PRU01052"/>
    </source>
</evidence>
<evidence type="ECO:0000256" key="3">
    <source>
        <dbReference type="SAM" id="MobiDB-lite"/>
    </source>
</evidence>
<accession>C5GMK3</accession>
<organism>
    <name type="scientific">Ajellomyces dermatitidis (strain ER-3 / ATCC MYA-2586)</name>
    <name type="common">Blastomyces dermatitidis</name>
    <dbReference type="NCBI Taxonomy" id="559297"/>
    <lineage>
        <taxon>Eukaryota</taxon>
        <taxon>Fungi</taxon>
        <taxon>Dikarya</taxon>
        <taxon>Ascomycota</taxon>
        <taxon>Pezizomycotina</taxon>
        <taxon>Eurotiomycetes</taxon>
        <taxon>Eurotiomycetidae</taxon>
        <taxon>Onygenales</taxon>
        <taxon>Ajellomycetaceae</taxon>
        <taxon>Blastomyces</taxon>
    </lineage>
</organism>